<protein>
    <recommendedName>
        <fullName evidence="1">Large ribosomal subunit protein uL24</fullName>
    </recommendedName>
    <alternativeName>
        <fullName evidence="3">50S ribosomal protein L24</fullName>
    </alternativeName>
</protein>
<feature type="chain" id="PRO_1000142004" description="Large ribosomal subunit protein uL24">
    <location>
        <begin position="1"/>
        <end position="73"/>
    </location>
</feature>
<feature type="region of interest" description="Disordered" evidence="2">
    <location>
        <begin position="51"/>
        <end position="73"/>
    </location>
</feature>
<feature type="compositionally biased region" description="Basic and acidic residues" evidence="2">
    <location>
        <begin position="51"/>
        <end position="65"/>
    </location>
</feature>
<accession>Q1CRV2</accession>
<evidence type="ECO:0000255" key="1">
    <source>
        <dbReference type="HAMAP-Rule" id="MF_01326"/>
    </source>
</evidence>
<evidence type="ECO:0000256" key="2">
    <source>
        <dbReference type="SAM" id="MobiDB-lite"/>
    </source>
</evidence>
<evidence type="ECO:0000305" key="3"/>
<keyword id="KW-0687">Ribonucleoprotein</keyword>
<keyword id="KW-0689">Ribosomal protein</keyword>
<keyword id="KW-0694">RNA-binding</keyword>
<keyword id="KW-0699">rRNA-binding</keyword>
<name>RL24_HELPH</name>
<sequence length="73" mass="7924">MKSEIKKNDMVKVIAGDDKGKVAKVLAVLPKTSQVVVEGCKVVKKAIKPTDDNPKGGFIHKEKPMHISNVKKA</sequence>
<proteinExistence type="inferred from homology"/>
<gene>
    <name evidence="1" type="primary">rplX</name>
    <name type="ordered locus">HPAG1_1253</name>
</gene>
<organism>
    <name type="scientific">Helicobacter pylori (strain HPAG1)</name>
    <dbReference type="NCBI Taxonomy" id="357544"/>
    <lineage>
        <taxon>Bacteria</taxon>
        <taxon>Pseudomonadati</taxon>
        <taxon>Campylobacterota</taxon>
        <taxon>Epsilonproteobacteria</taxon>
        <taxon>Campylobacterales</taxon>
        <taxon>Helicobacteraceae</taxon>
        <taxon>Helicobacter</taxon>
    </lineage>
</organism>
<dbReference type="EMBL" id="CP000241">
    <property type="protein sequence ID" value="ABF85320.1"/>
    <property type="molecule type" value="Genomic_DNA"/>
</dbReference>
<dbReference type="RefSeq" id="WP_000834238.1">
    <property type="nucleotide sequence ID" value="NC_008086.1"/>
</dbReference>
<dbReference type="SMR" id="Q1CRV2"/>
<dbReference type="GeneID" id="93237561"/>
<dbReference type="KEGG" id="hpa:HPAG1_1253"/>
<dbReference type="HOGENOM" id="CLU_093315_3_0_7"/>
<dbReference type="GO" id="GO:1990904">
    <property type="term" value="C:ribonucleoprotein complex"/>
    <property type="evidence" value="ECO:0007669"/>
    <property type="project" value="UniProtKB-KW"/>
</dbReference>
<dbReference type="GO" id="GO:0005840">
    <property type="term" value="C:ribosome"/>
    <property type="evidence" value="ECO:0007669"/>
    <property type="project" value="UniProtKB-KW"/>
</dbReference>
<dbReference type="GO" id="GO:0019843">
    <property type="term" value="F:rRNA binding"/>
    <property type="evidence" value="ECO:0007669"/>
    <property type="project" value="UniProtKB-UniRule"/>
</dbReference>
<dbReference type="GO" id="GO:0003735">
    <property type="term" value="F:structural constituent of ribosome"/>
    <property type="evidence" value="ECO:0007669"/>
    <property type="project" value="InterPro"/>
</dbReference>
<dbReference type="GO" id="GO:0006412">
    <property type="term" value="P:translation"/>
    <property type="evidence" value="ECO:0007669"/>
    <property type="project" value="UniProtKB-UniRule"/>
</dbReference>
<dbReference type="CDD" id="cd06089">
    <property type="entry name" value="KOW_RPL26"/>
    <property type="match status" value="1"/>
</dbReference>
<dbReference type="FunFam" id="2.30.30.30:FF:000023">
    <property type="entry name" value="50S ribosomal protein L24"/>
    <property type="match status" value="1"/>
</dbReference>
<dbReference type="Gene3D" id="2.30.30.30">
    <property type="match status" value="1"/>
</dbReference>
<dbReference type="HAMAP" id="MF_01326_B">
    <property type="entry name" value="Ribosomal_uL24_B"/>
    <property type="match status" value="1"/>
</dbReference>
<dbReference type="InterPro" id="IPR005824">
    <property type="entry name" value="KOW"/>
</dbReference>
<dbReference type="InterPro" id="IPR014722">
    <property type="entry name" value="Rib_uL2_dom2"/>
</dbReference>
<dbReference type="InterPro" id="IPR003256">
    <property type="entry name" value="Ribosomal_uL24"/>
</dbReference>
<dbReference type="InterPro" id="IPR005825">
    <property type="entry name" value="Ribosomal_uL24_CS"/>
</dbReference>
<dbReference type="InterPro" id="IPR041988">
    <property type="entry name" value="Ribosomal_uL24_KOW"/>
</dbReference>
<dbReference type="InterPro" id="IPR008991">
    <property type="entry name" value="Translation_prot_SH3-like_sf"/>
</dbReference>
<dbReference type="NCBIfam" id="TIGR01079">
    <property type="entry name" value="rplX_bact"/>
    <property type="match status" value="1"/>
</dbReference>
<dbReference type="PANTHER" id="PTHR12903">
    <property type="entry name" value="MITOCHONDRIAL RIBOSOMAL PROTEIN L24"/>
    <property type="match status" value="1"/>
</dbReference>
<dbReference type="Pfam" id="PF00467">
    <property type="entry name" value="KOW"/>
    <property type="match status" value="1"/>
</dbReference>
<dbReference type="Pfam" id="PF17136">
    <property type="entry name" value="ribosomal_L24"/>
    <property type="match status" value="1"/>
</dbReference>
<dbReference type="SMART" id="SM00739">
    <property type="entry name" value="KOW"/>
    <property type="match status" value="1"/>
</dbReference>
<dbReference type="SUPFAM" id="SSF50104">
    <property type="entry name" value="Translation proteins SH3-like domain"/>
    <property type="match status" value="1"/>
</dbReference>
<dbReference type="PROSITE" id="PS01108">
    <property type="entry name" value="RIBOSOMAL_L24"/>
    <property type="match status" value="1"/>
</dbReference>
<reference key="1">
    <citation type="journal article" date="2006" name="Proc. Natl. Acad. Sci. U.S.A.">
        <title>The complete genome sequence of a chronic atrophic gastritis Helicobacter pylori strain: evolution during disease progression.</title>
        <authorList>
            <person name="Oh J.D."/>
            <person name="Kling-Baeckhed H."/>
            <person name="Giannakis M."/>
            <person name="Xu J."/>
            <person name="Fulton R.S."/>
            <person name="Fulton L.A."/>
            <person name="Cordum H.S."/>
            <person name="Wang C."/>
            <person name="Elliott G."/>
            <person name="Edwards J."/>
            <person name="Mardis E.R."/>
            <person name="Engstrand L.G."/>
            <person name="Gordon J.I."/>
        </authorList>
    </citation>
    <scope>NUCLEOTIDE SEQUENCE [LARGE SCALE GENOMIC DNA]</scope>
    <source>
        <strain>HPAG1</strain>
    </source>
</reference>
<comment type="function">
    <text evidence="1">One of two assembly initiator proteins, it binds directly to the 5'-end of the 23S rRNA, where it nucleates assembly of the 50S subunit.</text>
</comment>
<comment type="function">
    <text evidence="1">One of the proteins that surrounds the polypeptide exit tunnel on the outside of the subunit.</text>
</comment>
<comment type="subunit">
    <text evidence="1">Part of the 50S ribosomal subunit.</text>
</comment>
<comment type="similarity">
    <text evidence="1">Belongs to the universal ribosomal protein uL24 family.</text>
</comment>